<organism>
    <name type="scientific">Escherichia coli (strain K12)</name>
    <dbReference type="NCBI Taxonomy" id="83333"/>
    <lineage>
        <taxon>Bacteria</taxon>
        <taxon>Pseudomonadati</taxon>
        <taxon>Pseudomonadota</taxon>
        <taxon>Gammaproteobacteria</taxon>
        <taxon>Enterobacterales</taxon>
        <taxon>Enterobacteriaceae</taxon>
        <taxon>Escherichia</taxon>
    </lineage>
</organism>
<dbReference type="EMBL" id="U00096">
    <property type="protein sequence ID" value="AAC75038.1"/>
    <property type="molecule type" value="Genomic_DNA"/>
</dbReference>
<dbReference type="EMBL" id="AP009048">
    <property type="protein sequence ID" value="BAE76560.1"/>
    <property type="molecule type" value="Genomic_DNA"/>
</dbReference>
<dbReference type="PIR" id="H64961">
    <property type="entry name" value="H64961"/>
</dbReference>
<dbReference type="RefSeq" id="NP_416481.1">
    <property type="nucleotide sequence ID" value="NC_000913.3"/>
</dbReference>
<dbReference type="RefSeq" id="WP_001240091.1">
    <property type="nucleotide sequence ID" value="NZ_LN832404.1"/>
</dbReference>
<dbReference type="BioGRID" id="4260772">
    <property type="interactions" value="12"/>
</dbReference>
<dbReference type="FunCoup" id="P76343">
    <property type="interactions" value="79"/>
</dbReference>
<dbReference type="IntAct" id="P76343">
    <property type="interactions" value="1"/>
</dbReference>
<dbReference type="STRING" id="511145.b1972"/>
<dbReference type="PaxDb" id="511145-b1972"/>
<dbReference type="EnsemblBacteria" id="AAC75038">
    <property type="protein sequence ID" value="AAC75038"/>
    <property type="gene ID" value="b1972"/>
</dbReference>
<dbReference type="GeneID" id="946483"/>
<dbReference type="KEGG" id="ecj:JW1955"/>
<dbReference type="KEGG" id="eco:b1972"/>
<dbReference type="KEGG" id="ecoc:C3026_11140"/>
<dbReference type="PATRIC" id="fig|1411691.4.peg.278"/>
<dbReference type="EchoBASE" id="EB3801"/>
<dbReference type="eggNOG" id="COG2717">
    <property type="taxonomic scope" value="Bacteria"/>
</dbReference>
<dbReference type="HOGENOM" id="CLU_080662_1_0_6"/>
<dbReference type="InParanoid" id="P76343"/>
<dbReference type="OMA" id="LHFFWMR"/>
<dbReference type="OrthoDB" id="9788328at2"/>
<dbReference type="PhylomeDB" id="P76343"/>
<dbReference type="BioCyc" id="EcoCyc:G7060-MONOMER"/>
<dbReference type="BioCyc" id="MetaCyc:G7060-MONOMER"/>
<dbReference type="BRENDA" id="1.8.5.B1">
    <property type="organism ID" value="2026"/>
</dbReference>
<dbReference type="PRO" id="PR:P76343"/>
<dbReference type="Proteomes" id="UP000000625">
    <property type="component" value="Chromosome"/>
</dbReference>
<dbReference type="GO" id="GO:0005886">
    <property type="term" value="C:plasma membrane"/>
    <property type="evidence" value="ECO:0000314"/>
    <property type="project" value="EcoCyc"/>
</dbReference>
<dbReference type="GO" id="GO:0009055">
    <property type="term" value="F:electron transfer activity"/>
    <property type="evidence" value="ECO:0007669"/>
    <property type="project" value="UniProtKB-UniRule"/>
</dbReference>
<dbReference type="GO" id="GO:0010181">
    <property type="term" value="F:FMN binding"/>
    <property type="evidence" value="ECO:0000314"/>
    <property type="project" value="EcoCyc"/>
</dbReference>
<dbReference type="GO" id="GO:0020037">
    <property type="term" value="F:heme binding"/>
    <property type="evidence" value="ECO:0000314"/>
    <property type="project" value="EcoCyc"/>
</dbReference>
<dbReference type="GO" id="GO:0046872">
    <property type="term" value="F:metal ion binding"/>
    <property type="evidence" value="ECO:0007669"/>
    <property type="project" value="UniProtKB-KW"/>
</dbReference>
<dbReference type="GO" id="GO:0016679">
    <property type="term" value="F:oxidoreductase activity, acting on diphenols and related substances as donors"/>
    <property type="evidence" value="ECO:0000314"/>
    <property type="project" value="EcoCyc"/>
</dbReference>
<dbReference type="GO" id="GO:0030091">
    <property type="term" value="P:protein repair"/>
    <property type="evidence" value="ECO:0000314"/>
    <property type="project" value="UniProtKB"/>
</dbReference>
<dbReference type="HAMAP" id="MF_01207">
    <property type="entry name" value="MsrQ"/>
    <property type="match status" value="1"/>
</dbReference>
<dbReference type="InterPro" id="IPR013130">
    <property type="entry name" value="Fe3_Rdtase_TM_dom"/>
</dbReference>
<dbReference type="InterPro" id="IPR022837">
    <property type="entry name" value="MsrQ-like"/>
</dbReference>
<dbReference type="NCBIfam" id="NF003830">
    <property type="entry name" value="PRK05419.1-1"/>
    <property type="match status" value="1"/>
</dbReference>
<dbReference type="NCBIfam" id="NF003831">
    <property type="entry name" value="PRK05419.1-2"/>
    <property type="match status" value="1"/>
</dbReference>
<dbReference type="NCBIfam" id="NF003832">
    <property type="entry name" value="PRK05419.1-4"/>
    <property type="match status" value="1"/>
</dbReference>
<dbReference type="PANTHER" id="PTHR36964">
    <property type="entry name" value="PROTEIN-METHIONINE-SULFOXIDE REDUCTASE HEME-BINDING SUBUNIT MSRQ"/>
    <property type="match status" value="1"/>
</dbReference>
<dbReference type="PANTHER" id="PTHR36964:SF1">
    <property type="entry name" value="PROTEIN-METHIONINE-SULFOXIDE REDUCTASE HEME-BINDING SUBUNIT MSRQ"/>
    <property type="match status" value="1"/>
</dbReference>
<dbReference type="Pfam" id="PF01794">
    <property type="entry name" value="Ferric_reduct"/>
    <property type="match status" value="1"/>
</dbReference>
<keyword id="KW-0997">Cell inner membrane</keyword>
<keyword id="KW-1003">Cell membrane</keyword>
<keyword id="KW-0249">Electron transport</keyword>
<keyword id="KW-0285">Flavoprotein</keyword>
<keyword id="KW-0288">FMN</keyword>
<keyword id="KW-0349">Heme</keyword>
<keyword id="KW-0408">Iron</keyword>
<keyword id="KW-0472">Membrane</keyword>
<keyword id="KW-0479">Metal-binding</keyword>
<keyword id="KW-1185">Reference proteome</keyword>
<keyword id="KW-0812">Transmembrane</keyword>
<keyword id="KW-1133">Transmembrane helix</keyword>
<keyword id="KW-0813">Transport</keyword>
<accession>P76343</accession>
<accession>Q2MAZ6</accession>
<evidence type="ECO:0000255" key="1">
    <source>
        <dbReference type="HAMAP-Rule" id="MF_01207"/>
    </source>
</evidence>
<evidence type="ECO:0000269" key="2">
    <source>
    </source>
</evidence>
<evidence type="ECO:0000269" key="3">
    <source>
    </source>
</evidence>
<evidence type="ECO:0000269" key="4">
    <source>
    </source>
</evidence>
<evidence type="ECO:0000303" key="5">
    <source>
    </source>
</evidence>
<evidence type="ECO:0000305" key="6"/>
<evidence type="ECO:0000305" key="7">
    <source>
    </source>
</evidence>
<evidence type="ECO:0000312" key="8">
    <source>
        <dbReference type="EMBL" id="AAC75038.1"/>
    </source>
</evidence>
<protein>
    <recommendedName>
        <fullName evidence="1 7">Protein-methionine-sulfoxide reductase heme-binding subunit MsrQ</fullName>
    </recommendedName>
    <alternativeName>
        <fullName evidence="1">Flavocytochrome MsrQ</fullName>
    </alternativeName>
</protein>
<comment type="function">
    <text evidence="4">Part of the MsrPQ system that repairs oxidized periplasmic proteins containing methionine sulfoxide residues (Met-O), using respiratory chain electrons. Thus protects these proteins from oxidative-stress damage caused by reactive species of oxygen and chlorine. MsrPQ is essential for the maintenance of envelope integrity under bleach stress, rescuing a wide series of structurally unrelated periplasmic proteins from methionine oxidation, including the primary periplasmic chaperone SurA and the lipoprotein Pal. MsrQ provides electrons for reduction to the reductase catalytic subunit MsrP, using the quinone pool of the respiratory chain.</text>
</comment>
<comment type="cofactor">
    <cofactor evidence="2">
        <name>FMN</name>
        <dbReference type="ChEBI" id="CHEBI:58210"/>
    </cofactor>
    <text evidence="2">Binds 1 FMN per subunit.</text>
</comment>
<comment type="cofactor">
    <cofactor evidence="3">
        <name>heme b</name>
        <dbReference type="ChEBI" id="CHEBI:60344"/>
    </cofactor>
    <text evidence="3">Binds 1 heme b (iron(II)-protoporphyrin IX) group per subunit.</text>
</comment>
<comment type="biophysicochemical properties">
    <redoxPotential>
        <text evidence="3">E(0) is -8 +/-16 mV at pH 7 for heme b.</text>
    </redoxPotential>
</comment>
<comment type="subunit">
    <text evidence="3">Heterodimer of a catalytic subunit (MsrP) and a heme-binding subunit (MsrQ).</text>
</comment>
<comment type="subcellular location">
    <subcellularLocation>
        <location>Cell inner membrane</location>
        <topology evidence="1 7">Multi-pass membrane protein</topology>
    </subcellularLocation>
</comment>
<comment type="disruption phenotype">
    <text evidence="3">Cells lacking the msrPQ genes display no visible growth defect.</text>
</comment>
<comment type="similarity">
    <text evidence="1">Belongs to the MsrQ family.</text>
</comment>
<proteinExistence type="evidence at protein level"/>
<sequence>MRLTAKQVTWLKVCLHLAGLLPFLWLVWAINHGGLGADPVKDIQHFTGRTALKFLLATLLITPLARYAKQPLLIRTRRLLGLWCFAWATLHLTSYALLELGVNNLALLGKELITRPYLTLGIISWVILLALAFTSTQAMQRKLGKHWQQLHNFVYLVAILAPIHYLWSVKIISPQPLIYAGLAVLLLALRYKKLRSLFNRLRKQVHNKLSV</sequence>
<feature type="chain" id="PRO_0000091574" description="Protein-methionine-sulfoxide reductase heme-binding subunit MsrQ">
    <location>
        <begin position="1"/>
        <end position="211"/>
    </location>
</feature>
<feature type="topological domain" description="Cytoplasmic" evidence="6">
    <location>
        <begin position="1"/>
        <end position="9"/>
    </location>
</feature>
<feature type="transmembrane region" description="Helical" evidence="1">
    <location>
        <begin position="10"/>
        <end position="30"/>
    </location>
</feature>
<feature type="topological domain" description="Periplasmic" evidence="6">
    <location>
        <begin position="31"/>
        <end position="44"/>
    </location>
</feature>
<feature type="transmembrane region" description="Helical" evidence="1">
    <location>
        <begin position="45"/>
        <end position="67"/>
    </location>
</feature>
<feature type="topological domain" description="Cytoplasmic" evidence="6">
    <location>
        <begin position="68"/>
        <end position="81"/>
    </location>
</feature>
<feature type="transmembrane region" description="Helical" evidence="1">
    <location>
        <begin position="82"/>
        <end position="102"/>
    </location>
</feature>
<feature type="topological domain" description="Periplasmic" evidence="6">
    <location>
        <begin position="103"/>
        <end position="115"/>
    </location>
</feature>
<feature type="transmembrane region" description="Helical" evidence="1">
    <location>
        <begin position="116"/>
        <end position="136"/>
    </location>
</feature>
<feature type="topological domain" description="Cytoplasmic" evidence="6">
    <location>
        <begin position="137"/>
        <end position="149"/>
    </location>
</feature>
<feature type="transmembrane region" description="Helical" evidence="1">
    <location>
        <begin position="150"/>
        <end position="167"/>
    </location>
</feature>
<feature type="topological domain" description="Periplasmic" evidence="6">
    <location>
        <begin position="168"/>
        <end position="170"/>
    </location>
</feature>
<feature type="transmembrane region" description="Helical" evidence="1">
    <location>
        <begin position="171"/>
        <end position="189"/>
    </location>
</feature>
<feature type="topological domain" description="Cytoplasmic" evidence="6">
    <location>
        <begin position="190"/>
        <end position="211"/>
    </location>
</feature>
<name>MSRQ_ECOLI</name>
<reference key="1">
    <citation type="journal article" date="1997" name="Science">
        <title>The complete genome sequence of Escherichia coli K-12.</title>
        <authorList>
            <person name="Blattner F.R."/>
            <person name="Plunkett G. III"/>
            <person name="Bloch C.A."/>
            <person name="Perna N.T."/>
            <person name="Burland V."/>
            <person name="Riley M."/>
            <person name="Collado-Vides J."/>
            <person name="Glasner J.D."/>
            <person name="Rode C.K."/>
            <person name="Mayhew G.F."/>
            <person name="Gregor J."/>
            <person name="Davis N.W."/>
            <person name="Kirkpatrick H.A."/>
            <person name="Goeden M.A."/>
            <person name="Rose D.J."/>
            <person name="Mau B."/>
            <person name="Shao Y."/>
        </authorList>
    </citation>
    <scope>NUCLEOTIDE SEQUENCE [LARGE SCALE GENOMIC DNA]</scope>
    <source>
        <strain>K12 / MG1655 / ATCC 47076</strain>
    </source>
</reference>
<reference key="2">
    <citation type="journal article" date="2006" name="Mol. Syst. Biol.">
        <title>Highly accurate genome sequences of Escherichia coli K-12 strains MG1655 and W3110.</title>
        <authorList>
            <person name="Hayashi K."/>
            <person name="Morooka N."/>
            <person name="Yamamoto Y."/>
            <person name="Fujita K."/>
            <person name="Isono K."/>
            <person name="Choi S."/>
            <person name="Ohtsubo E."/>
            <person name="Baba T."/>
            <person name="Wanner B.L."/>
            <person name="Mori H."/>
            <person name="Horiuchi T."/>
        </authorList>
    </citation>
    <scope>NUCLEOTIDE SEQUENCE [LARGE SCALE GENOMIC DNA]</scope>
    <source>
        <strain>K12 / W3110 / ATCC 27325 / DSM 5911</strain>
    </source>
</reference>
<reference key="3">
    <citation type="journal article" date="2002" name="Proc. Natl. Acad. Sci. U.S.A.">
        <title>Rapid topology mapping of Escherichia coli inner-membrane proteins by prediction and PhoA/GFP fusion analysis.</title>
        <authorList>
            <person name="Drew D."/>
            <person name="Sjoestrand D."/>
            <person name="Nilsson J."/>
            <person name="Urbig T."/>
            <person name="Chin C.-N."/>
            <person name="de Gier J.-W."/>
            <person name="von Heijne G."/>
        </authorList>
    </citation>
    <scope>TOPOLOGY</scope>
</reference>
<reference key="4">
    <citation type="journal article" date="2005" name="Biochemistry">
        <title>Characterization of an Escherichia coli sulfite oxidase homologue reveals the role of a conserved active site cysteine in assembly and function.</title>
        <authorList>
            <person name="Brokx S.J."/>
            <person name="Rothery R.A."/>
            <person name="Zhang G."/>
            <person name="Ng D.P."/>
            <person name="Weiner J.H."/>
        </authorList>
    </citation>
    <scope>COFACTOR</scope>
    <scope>DISRUPTION PHENOTYPE</scope>
    <scope>EPR SPECTROSCOPY</scope>
    <scope>REDOX POTENTIAL</scope>
    <scope>INTERACTION WITH MSRP</scope>
    <scope>SUBUNIT</scope>
    <source>
        <strain>K12 / MG1655 / ATCC 47076</strain>
    </source>
</reference>
<reference key="5">
    <citation type="journal article" date="2005" name="Protein Sci.">
        <title>A scalable, GFP-based pipeline for membrane protein overexpression screening and purification.</title>
        <authorList>
            <person name="Drew D."/>
            <person name="Slotboom D.J."/>
            <person name="Friso G."/>
            <person name="Reda T."/>
            <person name="Genevaux P."/>
            <person name="Rapp M."/>
            <person name="Meindl-Beinker N.M."/>
            <person name="Lambert W."/>
            <person name="Lerch M."/>
            <person name="Daley D.O."/>
            <person name="Van Wijk K.J."/>
            <person name="Hirst J."/>
            <person name="Kunji E."/>
            <person name="De Gier J.W."/>
        </authorList>
    </citation>
    <scope>COFACTOR</scope>
    <scope>FMN-BINDING</scope>
</reference>
<reference key="6">
    <citation type="journal article" date="2005" name="Science">
        <title>Global topology analysis of the Escherichia coli inner membrane proteome.</title>
        <authorList>
            <person name="Daley D.O."/>
            <person name="Rapp M."/>
            <person name="Granseth E."/>
            <person name="Melen K."/>
            <person name="Drew D."/>
            <person name="von Heijne G."/>
        </authorList>
    </citation>
    <scope>TOPOLOGY [LARGE SCALE ANALYSIS]</scope>
    <source>
        <strain>K12 / MG1655 / ATCC 47076</strain>
    </source>
</reference>
<reference key="7">
    <citation type="journal article" date="2015" name="Nature">
        <title>Repairing oxidized proteins in the bacterial envelope using respiratory chain electrons.</title>
        <authorList>
            <person name="Gennaris A."/>
            <person name="Ezraty B."/>
            <person name="Henry C."/>
            <person name="Agrebi R."/>
            <person name="Vergnes A."/>
            <person name="Oheix E."/>
            <person name="Bos J."/>
            <person name="Leverrier P."/>
            <person name="Espinosa L."/>
            <person name="Szewczyk J."/>
            <person name="Vertommen D."/>
            <person name="Iranzo O."/>
            <person name="Collet J.F."/>
            <person name="Barras F."/>
        </authorList>
    </citation>
    <scope>FUNCTION</scope>
    <source>
        <strain>K12</strain>
    </source>
</reference>
<gene>
    <name evidence="5" type="primary">msrQ</name>
    <name evidence="8" type="synonym">yedZ</name>
    <name type="ordered locus">b1972</name>
    <name type="ordered locus">JW1955</name>
</gene>